<feature type="signal peptide" evidence="3">
    <location>
        <begin position="1" status="less than"/>
        <end position="18"/>
    </location>
</feature>
<feature type="chain" id="PRO_0000016232" description="Integrin alpha-2">
    <location>
        <begin position="19"/>
        <end position="1170"/>
    </location>
</feature>
<feature type="topological domain" description="Extracellular" evidence="3">
    <location>
        <begin position="19"/>
        <end position="1121"/>
    </location>
</feature>
<feature type="transmembrane region" description="Helical" evidence="3">
    <location>
        <begin position="1122"/>
        <end position="1143"/>
    </location>
</feature>
<feature type="topological domain" description="Cytoplasmic" evidence="3">
    <location>
        <begin position="1144"/>
        <end position="1170"/>
    </location>
</feature>
<feature type="repeat" description="FG-GAP 1" evidence="5">
    <location>
        <begin position="23"/>
        <end position="81"/>
    </location>
</feature>
<feature type="repeat" description="FG-GAP 2" evidence="5">
    <location>
        <begin position="90"/>
        <end position="150"/>
    </location>
</feature>
<feature type="domain" description="VWFA" evidence="4">
    <location>
        <begin position="177"/>
        <end position="354"/>
    </location>
</feature>
<feature type="repeat" description="FG-GAP 3" evidence="5">
    <location>
        <begin position="355"/>
        <end position="409"/>
    </location>
</feature>
<feature type="repeat" description="FG-GAP 4" evidence="5">
    <location>
        <begin position="412"/>
        <end position="464"/>
    </location>
</feature>
<feature type="repeat" description="FG-GAP 5" evidence="5">
    <location>
        <begin position="466"/>
        <end position="528"/>
    </location>
</feature>
<feature type="repeat" description="FG-GAP 6" evidence="5">
    <location>
        <begin position="529"/>
        <end position="587"/>
    </location>
</feature>
<feature type="repeat" description="FG-GAP 7" evidence="5">
    <location>
        <begin position="591"/>
        <end position="653"/>
    </location>
</feature>
<feature type="short sequence motif" description="Cell attachment site" evidence="3">
    <location>
        <begin position="472"/>
        <end position="474"/>
    </location>
</feature>
<feature type="short sequence motif" description="GFFKR motif">
    <location>
        <begin position="1146"/>
        <end position="1150"/>
    </location>
</feature>
<feature type="binding site" evidence="2">
    <location>
        <position position="488"/>
    </location>
    <ligand>
        <name>Ca(2+)</name>
        <dbReference type="ChEBI" id="CHEBI:29108"/>
        <label>1</label>
    </ligand>
</feature>
<feature type="binding site" evidence="2">
    <location>
        <position position="490"/>
    </location>
    <ligand>
        <name>Ca(2+)</name>
        <dbReference type="ChEBI" id="CHEBI:29108"/>
        <label>1</label>
    </ligand>
</feature>
<feature type="binding site" evidence="2">
    <location>
        <position position="492"/>
    </location>
    <ligand>
        <name>Ca(2+)</name>
        <dbReference type="ChEBI" id="CHEBI:29108"/>
        <label>1</label>
    </ligand>
</feature>
<feature type="binding site" evidence="2">
    <location>
        <position position="496"/>
    </location>
    <ligand>
        <name>Ca(2+)</name>
        <dbReference type="ChEBI" id="CHEBI:29108"/>
        <label>1</label>
    </ligand>
</feature>
<feature type="binding site" evidence="2">
    <location>
        <position position="552"/>
    </location>
    <ligand>
        <name>Ca(2+)</name>
        <dbReference type="ChEBI" id="CHEBI:29108"/>
        <label>2</label>
    </ligand>
</feature>
<feature type="binding site" evidence="2">
    <location>
        <position position="554"/>
    </location>
    <ligand>
        <name>Ca(2+)</name>
        <dbReference type="ChEBI" id="CHEBI:29108"/>
        <label>2</label>
    </ligand>
</feature>
<feature type="binding site" evidence="2">
    <location>
        <position position="556"/>
    </location>
    <ligand>
        <name>Ca(2+)</name>
        <dbReference type="ChEBI" id="CHEBI:29108"/>
        <label>2</label>
    </ligand>
</feature>
<feature type="binding site" evidence="2">
    <location>
        <position position="560"/>
    </location>
    <ligand>
        <name>Ca(2+)</name>
        <dbReference type="ChEBI" id="CHEBI:29108"/>
        <label>2</label>
    </ligand>
</feature>
<feature type="binding site" evidence="2">
    <location>
        <position position="616"/>
    </location>
    <ligand>
        <name>Ca(2+)</name>
        <dbReference type="ChEBI" id="CHEBI:29108"/>
        <label>3</label>
    </ligand>
</feature>
<feature type="binding site" evidence="2">
    <location>
        <position position="618"/>
    </location>
    <ligand>
        <name>Ca(2+)</name>
        <dbReference type="ChEBI" id="CHEBI:29108"/>
        <label>3</label>
    </ligand>
</feature>
<feature type="binding site" evidence="2">
    <location>
        <position position="620"/>
    </location>
    <ligand>
        <name>Ca(2+)</name>
        <dbReference type="ChEBI" id="CHEBI:29108"/>
        <label>3</label>
    </ligand>
</feature>
<feature type="binding site" evidence="2">
    <location>
        <position position="624"/>
    </location>
    <ligand>
        <name>Ca(2+)</name>
        <dbReference type="ChEBI" id="CHEBI:29108"/>
        <label>3</label>
    </ligand>
</feature>
<feature type="glycosylation site" description="N-linked (GlcNAc...) asparagine" evidence="3">
    <location>
        <position position="94"/>
    </location>
</feature>
<feature type="glycosylation site" description="N-linked (GlcNAc...) asparagine" evidence="3">
    <location>
        <position position="101"/>
    </location>
</feature>
<feature type="glycosylation site" description="N-linked (GlcNAc...) asparagine" evidence="3">
    <location>
        <position position="332"/>
    </location>
</feature>
<feature type="glycosylation site" description="N-linked (GlcNAc...) asparagine" evidence="3">
    <location>
        <position position="421"/>
    </location>
</feature>
<feature type="glycosylation site" description="N-linked (GlcNAc...) asparagine" evidence="3">
    <location>
        <position position="449"/>
    </location>
</feature>
<feature type="glycosylation site" description="N-linked (GlcNAc...) asparagine" evidence="3">
    <location>
        <position position="464"/>
    </location>
</feature>
<feature type="glycosylation site" description="N-linked (GlcNAc...) asparagine" evidence="3">
    <location>
        <position position="688"/>
    </location>
</feature>
<feature type="glycosylation site" description="N-linked (GlcNAc...) asparagine" evidence="3">
    <location>
        <position position="748"/>
    </location>
</feature>
<feature type="glycosylation site" description="N-linked (GlcNAc...) asparagine" evidence="3">
    <location>
        <position position="945"/>
    </location>
</feature>
<feature type="glycosylation site" description="N-linked (GlcNAc...) asparagine" evidence="3">
    <location>
        <position position="1063"/>
    </location>
</feature>
<feature type="glycosylation site" description="N-linked (GlcNAc...) asparagine" evidence="3">
    <location>
        <position position="1070"/>
    </location>
</feature>
<feature type="disulfide bond" evidence="1">
    <location>
        <begin position="72"/>
        <end position="81"/>
    </location>
</feature>
<feature type="disulfide bond" evidence="1">
    <location>
        <begin position="669"/>
        <end position="726"/>
    </location>
</feature>
<feature type="disulfide bond" evidence="1">
    <location>
        <begin position="778"/>
        <end position="784"/>
    </location>
</feature>
<feature type="disulfide bond" evidence="1">
    <location>
        <begin position="854"/>
        <end position="865"/>
    </location>
</feature>
<feature type="disulfide bond" evidence="1">
    <location>
        <begin position="1008"/>
        <end position="1039"/>
    </location>
</feature>
<feature type="disulfide bond" evidence="1">
    <location>
        <begin position="1044"/>
        <end position="1049"/>
    </location>
</feature>
<feature type="sequence variant">
    <original>G</original>
    <variation>V</variation>
    <location>
        <position position="580"/>
    </location>
</feature>
<feature type="sequence variant">
    <original>R</original>
    <variation>K</variation>
    <location>
        <position position="588"/>
    </location>
</feature>
<feature type="sequence variant">
    <original>R</original>
    <variation>S</variation>
    <location>
        <position position="725"/>
    </location>
</feature>
<feature type="non-terminal residue">
    <location>
        <position position="1"/>
    </location>
</feature>
<name>ITA2_BOVIN</name>
<protein>
    <recommendedName>
        <fullName>Integrin alpha-2</fullName>
    </recommendedName>
    <alternativeName>
        <fullName>CD49 antigen-like family member B</fullName>
    </alternativeName>
    <alternativeName>
        <fullName>Collagen receptor</fullName>
    </alternativeName>
    <alternativeName>
        <fullName>Platelet membrane glycoprotein Ia</fullName>
        <shortName>GPIa</shortName>
    </alternativeName>
    <alternativeName>
        <fullName>VLA-2 subunit alpha</fullName>
    </alternativeName>
    <cdAntigenName>CD49b</cdAntigenName>
</protein>
<organism>
    <name type="scientific">Bos taurus</name>
    <name type="common">Bovine</name>
    <dbReference type="NCBI Taxonomy" id="9913"/>
    <lineage>
        <taxon>Eukaryota</taxon>
        <taxon>Metazoa</taxon>
        <taxon>Chordata</taxon>
        <taxon>Craniata</taxon>
        <taxon>Vertebrata</taxon>
        <taxon>Euteleostomi</taxon>
        <taxon>Mammalia</taxon>
        <taxon>Eutheria</taxon>
        <taxon>Laurasiatheria</taxon>
        <taxon>Artiodactyla</taxon>
        <taxon>Ruminantia</taxon>
        <taxon>Pecora</taxon>
        <taxon>Bovidae</taxon>
        <taxon>Bovinae</taxon>
        <taxon>Bos</taxon>
    </lineage>
</organism>
<dbReference type="EMBL" id="L25886">
    <property type="protein sequence ID" value="AAB59255.1"/>
    <property type="molecule type" value="mRNA"/>
</dbReference>
<dbReference type="PIR" id="I45914">
    <property type="entry name" value="I45914"/>
</dbReference>
<dbReference type="SMR" id="P53710"/>
<dbReference type="FunCoup" id="P53710">
    <property type="interactions" value="254"/>
</dbReference>
<dbReference type="STRING" id="9913.ENSBTAP00000025685"/>
<dbReference type="GlyCosmos" id="P53710">
    <property type="glycosylation" value="11 sites, No reported glycans"/>
</dbReference>
<dbReference type="GlyGen" id="P53710">
    <property type="glycosylation" value="11 sites"/>
</dbReference>
<dbReference type="PaxDb" id="9913-ENSBTAP00000025685"/>
<dbReference type="PeptideAtlas" id="P53710"/>
<dbReference type="eggNOG" id="KOG3637">
    <property type="taxonomic scope" value="Eukaryota"/>
</dbReference>
<dbReference type="InParanoid" id="P53710"/>
<dbReference type="OrthoDB" id="5317514at2759"/>
<dbReference type="Proteomes" id="UP000009136">
    <property type="component" value="Unplaced"/>
</dbReference>
<dbReference type="GO" id="GO:0009897">
    <property type="term" value="C:external side of plasma membrane"/>
    <property type="evidence" value="ECO:0000318"/>
    <property type="project" value="GO_Central"/>
</dbReference>
<dbReference type="GO" id="GO:0008305">
    <property type="term" value="C:integrin complex"/>
    <property type="evidence" value="ECO:0000318"/>
    <property type="project" value="GO_Central"/>
</dbReference>
<dbReference type="GO" id="GO:0005178">
    <property type="term" value="F:integrin binding"/>
    <property type="evidence" value="ECO:0000318"/>
    <property type="project" value="GO_Central"/>
</dbReference>
<dbReference type="GO" id="GO:0046872">
    <property type="term" value="F:metal ion binding"/>
    <property type="evidence" value="ECO:0007669"/>
    <property type="project" value="UniProtKB-KW"/>
</dbReference>
<dbReference type="GO" id="GO:0033627">
    <property type="term" value="P:cell adhesion mediated by integrin"/>
    <property type="evidence" value="ECO:0000318"/>
    <property type="project" value="GO_Central"/>
</dbReference>
<dbReference type="GO" id="GO:0098609">
    <property type="term" value="P:cell-cell adhesion"/>
    <property type="evidence" value="ECO:0000318"/>
    <property type="project" value="GO_Central"/>
</dbReference>
<dbReference type="GO" id="GO:0007229">
    <property type="term" value="P:integrin-mediated signaling pathway"/>
    <property type="evidence" value="ECO:0000318"/>
    <property type="project" value="GO_Central"/>
</dbReference>
<dbReference type="CDD" id="cd01469">
    <property type="entry name" value="vWA_integrins_alpha_subunit"/>
    <property type="match status" value="1"/>
</dbReference>
<dbReference type="FunFam" id="2.130.10.130:FF:000008">
    <property type="entry name" value="Integrin subunit alpha 2"/>
    <property type="match status" value="1"/>
</dbReference>
<dbReference type="FunFam" id="3.40.50.410:FF:000012">
    <property type="entry name" value="Integrin, alpha 10"/>
    <property type="match status" value="1"/>
</dbReference>
<dbReference type="Gene3D" id="1.20.5.930">
    <property type="entry name" value="Bicelle-embedded integrin alpha(iib) transmembrane segment"/>
    <property type="match status" value="1"/>
</dbReference>
<dbReference type="Gene3D" id="2.130.10.130">
    <property type="entry name" value="Integrin alpha, N-terminal"/>
    <property type="match status" value="1"/>
</dbReference>
<dbReference type="Gene3D" id="2.60.40.1460">
    <property type="entry name" value="Integrin domains. Chain A, domain 2"/>
    <property type="match status" value="1"/>
</dbReference>
<dbReference type="Gene3D" id="2.60.40.1510">
    <property type="entry name" value="ntegrin, alpha v. Chain A, domain 3"/>
    <property type="match status" value="1"/>
</dbReference>
<dbReference type="Gene3D" id="2.60.40.1530">
    <property type="entry name" value="ntegrin, alpha v. Chain A, domain 4"/>
    <property type="match status" value="1"/>
</dbReference>
<dbReference type="Gene3D" id="3.40.50.410">
    <property type="entry name" value="von Willebrand factor, type A domain"/>
    <property type="match status" value="1"/>
</dbReference>
<dbReference type="InterPro" id="IPR013517">
    <property type="entry name" value="FG-GAP"/>
</dbReference>
<dbReference type="InterPro" id="IPR013519">
    <property type="entry name" value="Int_alpha_beta-p"/>
</dbReference>
<dbReference type="InterPro" id="IPR000413">
    <property type="entry name" value="Integrin_alpha"/>
</dbReference>
<dbReference type="InterPro" id="IPR018184">
    <property type="entry name" value="Integrin_alpha_C_CS"/>
</dbReference>
<dbReference type="InterPro" id="IPR048285">
    <property type="entry name" value="Integrin_alpha_Ig-like_2"/>
</dbReference>
<dbReference type="InterPro" id="IPR048286">
    <property type="entry name" value="Integrin_alpha_Ig-like_3"/>
</dbReference>
<dbReference type="InterPro" id="IPR028994">
    <property type="entry name" value="Integrin_alpha_N"/>
</dbReference>
<dbReference type="InterPro" id="IPR032695">
    <property type="entry name" value="Integrin_dom_sf"/>
</dbReference>
<dbReference type="InterPro" id="IPR002035">
    <property type="entry name" value="VWF_A"/>
</dbReference>
<dbReference type="InterPro" id="IPR036465">
    <property type="entry name" value="vWFA_dom_sf"/>
</dbReference>
<dbReference type="PANTHER" id="PTHR23220">
    <property type="entry name" value="INTEGRIN ALPHA"/>
    <property type="match status" value="1"/>
</dbReference>
<dbReference type="PANTHER" id="PTHR23220:SF23">
    <property type="entry name" value="INTEGRIN ALPHA-2"/>
    <property type="match status" value="1"/>
</dbReference>
<dbReference type="Pfam" id="PF01839">
    <property type="entry name" value="FG-GAP"/>
    <property type="match status" value="2"/>
</dbReference>
<dbReference type="Pfam" id="PF20805">
    <property type="entry name" value="Integrin_A_Ig_2"/>
    <property type="match status" value="1"/>
</dbReference>
<dbReference type="Pfam" id="PF20806">
    <property type="entry name" value="Integrin_A_Ig_3"/>
    <property type="match status" value="1"/>
</dbReference>
<dbReference type="Pfam" id="PF00092">
    <property type="entry name" value="VWA"/>
    <property type="match status" value="1"/>
</dbReference>
<dbReference type="PRINTS" id="PR01185">
    <property type="entry name" value="INTEGRINA"/>
</dbReference>
<dbReference type="PRINTS" id="PR00453">
    <property type="entry name" value="VWFADOMAIN"/>
</dbReference>
<dbReference type="SMART" id="SM00191">
    <property type="entry name" value="Int_alpha"/>
    <property type="match status" value="5"/>
</dbReference>
<dbReference type="SMART" id="SM00327">
    <property type="entry name" value="VWA"/>
    <property type="match status" value="1"/>
</dbReference>
<dbReference type="SUPFAM" id="SSF69318">
    <property type="entry name" value="Integrin alpha N-terminal domain"/>
    <property type="match status" value="1"/>
</dbReference>
<dbReference type="SUPFAM" id="SSF69179">
    <property type="entry name" value="Integrin domains"/>
    <property type="match status" value="3"/>
</dbReference>
<dbReference type="SUPFAM" id="SSF53300">
    <property type="entry name" value="vWA-like"/>
    <property type="match status" value="1"/>
</dbReference>
<dbReference type="PROSITE" id="PS51470">
    <property type="entry name" value="FG_GAP"/>
    <property type="match status" value="7"/>
</dbReference>
<dbReference type="PROSITE" id="PS00242">
    <property type="entry name" value="INTEGRIN_ALPHA"/>
    <property type="match status" value="1"/>
</dbReference>
<dbReference type="PROSITE" id="PS50234">
    <property type="entry name" value="VWFA"/>
    <property type="match status" value="1"/>
</dbReference>
<reference key="1">
    <citation type="journal article" date="1994" name="J. Biol. Chem.">
        <title>Identification of putative ligand binding sites within I domain of integrin alpha 2 beta 1 (VLA-2, CD49b/CD29).</title>
        <authorList>
            <person name="Kamata T."/>
            <person name="Puzon W."/>
            <person name="Takada Y."/>
        </authorList>
    </citation>
    <scope>NUCLEOTIDE SEQUENCE [MRNA]</scope>
</reference>
<proteinExistence type="evidence at transcript level"/>
<gene>
    <name type="primary">ITGA2</name>
</gene>
<keyword id="KW-0106">Calcium</keyword>
<keyword id="KW-0130">Cell adhesion</keyword>
<keyword id="KW-1015">Disulfide bond</keyword>
<keyword id="KW-0325">Glycoprotein</keyword>
<keyword id="KW-0401">Integrin</keyword>
<keyword id="KW-0460">Magnesium</keyword>
<keyword id="KW-0472">Membrane</keyword>
<keyword id="KW-0479">Metal-binding</keyword>
<keyword id="KW-0675">Receptor</keyword>
<keyword id="KW-1185">Reference proteome</keyword>
<keyword id="KW-0677">Repeat</keyword>
<keyword id="KW-0732">Signal</keyword>
<keyword id="KW-0812">Transmembrane</keyword>
<keyword id="KW-1133">Transmembrane helix</keyword>
<comment type="function">
    <text>Integrin alpha-2/beta-1 is a receptor for laminin, collagen, collagen C-propeptides, fibronectin and E-cadherin. It recognizes the proline-hydroxylated sequence G-F-P-G-E-R in collagen. It is responsible for adhesion of platelets and other cells to collagens, modulation of collagen and collagenase gene expression, force generation and organization of newly synthesized extracellular matrix.</text>
</comment>
<comment type="subunit">
    <text evidence="1">Heterodimer of an alpha and a beta subunit. Alpha-2 associates with beta-1. Interacts with HPS5 and RAB21 (By similarity).</text>
</comment>
<comment type="subcellular location">
    <subcellularLocation>
        <location>Membrane</location>
        <topology>Single-pass type I membrane protein</topology>
    </subcellularLocation>
</comment>
<comment type="domain">
    <text>The integrin I-domain (insert) is a VWFA domain. Integrins with I-domains do not undergo protease cleavage.</text>
</comment>
<comment type="similarity">
    <text evidence="6">Belongs to the integrin alpha chain family.</text>
</comment>
<sequence length="1170" mass="128929">PLQLVLVFSQGILNCCVAYNVGLPKAKIFSGPSSEQFGYAVQQFINPKGNWLLVGSPWSGFPKNRMGDVYKCPVDLSTTTCEKLNLQTSTSMSNVTEMKTNMSLGLTLTRNVGTGGFLTCGPLWAQQCGSQYYTTGVCSDVSPDFQLRTSFAPAVQTCPSFIDVVVVCDESNSIYPWDAVKNFLEKFVQGLDIGPTKTQMGLIQYANNPRVVFNLNTFKSKDEMIKATSQTFQYGGDLTNTFKAIQYARDTAYSTAAGGRPGATKVMVVVTDGESHDGSKLKAVIDQCNKDNILRFGIAVLGYLNRNALDTKNLIKEIKAIASIPTERHFFNVSDEADLLEKAGTIGEQIFSIEGTVQGGDNFQMEMSQVGFSAEYSPQNNILMLGAVGAYDWSGTVVQKTPHGHLIFSKQAFEQILQDRNHSSYLGYSVASISTGNSVHFVAGAPRANYTGQIVLYSVNENGNVTVIQSQRGDQIGSYFGSVLCAVDVNKDTITDVLLVGAPMYMNDLKKEEGRVYLFTITKGILNWHQFLEGPNGLENARFGSAIAALSDINMDGFNDVIVGSPLENQNSGAVYIYNGHEGMIRLRYSQKILGSDRAFSSHLQYFGRSLDGYGDLNGDSITDVSVGAFGQVVQLWSQSIADVSVDASFTPKKITLLNKNAEIKLKLCFSAKFRPTNQNNQVAIVYNITIDEDQFSSRVISRGLFKENNERCLQKTMIVSQAQRCSEYIIHIQEPSDIISPLNLCMNISLENPGTNPALEAYSETVKVFSIPFHKDCGDDGVCISDLVLNVQQLPATQQQPFIVSNQNKRLTFSVQLKNKKESAYNTEIVVDFSENLFFASWSMPVDGTEVTCQIASSQKSVTCNVGYPALKSKQQVTFTINFDFNLQNLQNQASISFRALSESQEENMADNSVNLKLSLLYDAEIHITRSTNINFYEVSLDGNVSSVVHSFEDIGPKFIFSIKVTTGSVPVSMASVIIHIPQYTKDKNPLMYLTGVHTDQAGDISCEAEINPLKIGQTSSSVSFKSENFRHIKELNCRTASCSNIMCWLRDLQVKGEYFLNVSTRIWNGTFAASTFQTVQLTAAAEIDTYNPQIYVIEENTVTIPLTIMKPHEKVEVPTGVIVGSVIAGILLLLALVAILWKLGFFKRKYEKMAKNPDETDETTELNS</sequence>
<accession>P53710</accession>
<evidence type="ECO:0000250" key="1"/>
<evidence type="ECO:0000250" key="2">
    <source>
        <dbReference type="UniProtKB" id="P08648"/>
    </source>
</evidence>
<evidence type="ECO:0000255" key="3"/>
<evidence type="ECO:0000255" key="4">
    <source>
        <dbReference type="PROSITE-ProRule" id="PRU00219"/>
    </source>
</evidence>
<evidence type="ECO:0000255" key="5">
    <source>
        <dbReference type="PROSITE-ProRule" id="PRU00803"/>
    </source>
</evidence>
<evidence type="ECO:0000305" key="6"/>